<evidence type="ECO:0000250" key="1"/>
<evidence type="ECO:0000250" key="2">
    <source>
        <dbReference type="UniProtKB" id="Q9NRW1"/>
    </source>
</evidence>
<evidence type="ECO:0000305" key="3"/>
<name>RAB6B_BOVIN</name>
<protein>
    <recommendedName>
        <fullName>Ras-related protein Rab-6B</fullName>
        <ecNumber evidence="2">3.6.5.2</ecNumber>
    </recommendedName>
</protein>
<keyword id="KW-0968">Cytoplasmic vesicle</keyword>
<keyword id="KW-0931">ER-Golgi transport</keyword>
<keyword id="KW-0333">Golgi apparatus</keyword>
<keyword id="KW-0342">GTP-binding</keyword>
<keyword id="KW-0378">Hydrolase</keyword>
<keyword id="KW-0449">Lipoprotein</keyword>
<keyword id="KW-0472">Membrane</keyword>
<keyword id="KW-0488">Methylation</keyword>
<keyword id="KW-0547">Nucleotide-binding</keyword>
<keyword id="KW-0636">Prenylation</keyword>
<keyword id="KW-0653">Protein transport</keyword>
<keyword id="KW-1185">Reference proteome</keyword>
<keyword id="KW-0813">Transport</keyword>
<proteinExistence type="evidence at transcript level"/>
<gene>
    <name type="primary">RAB6B</name>
</gene>
<feature type="chain" id="PRO_0000371507" description="Ras-related protein Rab-6B">
    <location>
        <begin position="1"/>
        <end position="208"/>
    </location>
</feature>
<feature type="short sequence motif" description="Effector region" evidence="1">
    <location>
        <begin position="42"/>
        <end position="50"/>
    </location>
</feature>
<feature type="binding site" evidence="1">
    <location>
        <begin position="20"/>
        <end position="27"/>
    </location>
    <ligand>
        <name>GTP</name>
        <dbReference type="ChEBI" id="CHEBI:37565"/>
    </ligand>
</feature>
<feature type="binding site" evidence="1">
    <location>
        <position position="45"/>
    </location>
    <ligand>
        <name>GTP</name>
        <dbReference type="ChEBI" id="CHEBI:37565"/>
    </ligand>
</feature>
<feature type="binding site" evidence="1">
    <location>
        <begin position="68"/>
        <end position="72"/>
    </location>
    <ligand>
        <name>GTP</name>
        <dbReference type="ChEBI" id="CHEBI:37565"/>
    </ligand>
</feature>
<feature type="binding site" evidence="1">
    <location>
        <begin position="126"/>
        <end position="129"/>
    </location>
    <ligand>
        <name>GTP</name>
        <dbReference type="ChEBI" id="CHEBI:37565"/>
    </ligand>
</feature>
<feature type="modified residue" description="Cysteine methyl ester" evidence="1">
    <location>
        <position position="208"/>
    </location>
</feature>
<feature type="lipid moiety-binding region" description="S-geranylgeranyl cysteine" evidence="1">
    <location>
        <position position="206"/>
    </location>
</feature>
<feature type="lipid moiety-binding region" description="S-geranylgeranyl cysteine" evidence="1">
    <location>
        <position position="208"/>
    </location>
</feature>
<dbReference type="EC" id="3.6.5.2" evidence="2"/>
<dbReference type="EMBL" id="BC150111">
    <property type="protein sequence ID" value="AAI50112.1"/>
    <property type="molecule type" value="mRNA"/>
</dbReference>
<dbReference type="RefSeq" id="NP_001094599.1">
    <property type="nucleotide sequence ID" value="NM_001101129.1"/>
</dbReference>
<dbReference type="SMR" id="A6QR46"/>
<dbReference type="FunCoup" id="A6QR46">
    <property type="interactions" value="1546"/>
</dbReference>
<dbReference type="STRING" id="9913.ENSBTAP00000001199"/>
<dbReference type="PaxDb" id="9913-ENSBTAP00000001199"/>
<dbReference type="GeneID" id="526526"/>
<dbReference type="KEGG" id="bta:526526"/>
<dbReference type="CTD" id="51560"/>
<dbReference type="eggNOG" id="KOG0094">
    <property type="taxonomic scope" value="Eukaryota"/>
</dbReference>
<dbReference type="HOGENOM" id="CLU_041217_10_2_1"/>
<dbReference type="InParanoid" id="A6QR46"/>
<dbReference type="OrthoDB" id="63533at2759"/>
<dbReference type="TreeFam" id="TF300803"/>
<dbReference type="Proteomes" id="UP000009136">
    <property type="component" value="Unplaced"/>
</dbReference>
<dbReference type="GO" id="GO:0031410">
    <property type="term" value="C:cytoplasmic vesicle"/>
    <property type="evidence" value="ECO:0007669"/>
    <property type="project" value="UniProtKB-KW"/>
</dbReference>
<dbReference type="GO" id="GO:0005793">
    <property type="term" value="C:endoplasmic reticulum-Golgi intermediate compartment"/>
    <property type="evidence" value="ECO:0007669"/>
    <property type="project" value="UniProtKB-SubCell"/>
</dbReference>
<dbReference type="GO" id="GO:0000139">
    <property type="term" value="C:Golgi membrane"/>
    <property type="evidence" value="ECO:0000250"/>
    <property type="project" value="UniProtKB"/>
</dbReference>
<dbReference type="GO" id="GO:0005525">
    <property type="term" value="F:GTP binding"/>
    <property type="evidence" value="ECO:0000318"/>
    <property type="project" value="GO_Central"/>
</dbReference>
<dbReference type="GO" id="GO:0003924">
    <property type="term" value="F:GTPase activity"/>
    <property type="evidence" value="ECO:0000318"/>
    <property type="project" value="GO_Central"/>
</dbReference>
<dbReference type="GO" id="GO:0007030">
    <property type="term" value="P:Golgi organization"/>
    <property type="evidence" value="ECO:0000250"/>
    <property type="project" value="UniProtKB"/>
</dbReference>
<dbReference type="GO" id="GO:1903292">
    <property type="term" value="P:protein localization to Golgi membrane"/>
    <property type="evidence" value="ECO:0000250"/>
    <property type="project" value="UniProtKB"/>
</dbReference>
<dbReference type="GO" id="GO:0015031">
    <property type="term" value="P:protein transport"/>
    <property type="evidence" value="ECO:0007669"/>
    <property type="project" value="UniProtKB-KW"/>
</dbReference>
<dbReference type="GO" id="GO:0016192">
    <property type="term" value="P:vesicle-mediated transport"/>
    <property type="evidence" value="ECO:0000318"/>
    <property type="project" value="GO_Central"/>
</dbReference>
<dbReference type="CDD" id="cd01861">
    <property type="entry name" value="Rab6"/>
    <property type="match status" value="1"/>
</dbReference>
<dbReference type="FunFam" id="3.40.50.300:FF:001163">
    <property type="entry name" value="RAB6B, member RAS oncogene family"/>
    <property type="match status" value="1"/>
</dbReference>
<dbReference type="Gene3D" id="3.40.50.300">
    <property type="entry name" value="P-loop containing nucleotide triphosphate hydrolases"/>
    <property type="match status" value="1"/>
</dbReference>
<dbReference type="InterPro" id="IPR027417">
    <property type="entry name" value="P-loop_NTPase"/>
</dbReference>
<dbReference type="InterPro" id="IPR050227">
    <property type="entry name" value="Rab"/>
</dbReference>
<dbReference type="InterPro" id="IPR005225">
    <property type="entry name" value="Small_GTP-bd"/>
</dbReference>
<dbReference type="InterPro" id="IPR001806">
    <property type="entry name" value="Small_GTPase"/>
</dbReference>
<dbReference type="NCBIfam" id="TIGR00231">
    <property type="entry name" value="small_GTP"/>
    <property type="match status" value="1"/>
</dbReference>
<dbReference type="PANTHER" id="PTHR47977">
    <property type="entry name" value="RAS-RELATED PROTEIN RAB"/>
    <property type="match status" value="1"/>
</dbReference>
<dbReference type="Pfam" id="PF00071">
    <property type="entry name" value="Ras"/>
    <property type="match status" value="1"/>
</dbReference>
<dbReference type="PRINTS" id="PR00449">
    <property type="entry name" value="RASTRNSFRMNG"/>
</dbReference>
<dbReference type="SMART" id="SM00175">
    <property type="entry name" value="RAB"/>
    <property type="match status" value="1"/>
</dbReference>
<dbReference type="SMART" id="SM00176">
    <property type="entry name" value="RAN"/>
    <property type="match status" value="1"/>
</dbReference>
<dbReference type="SMART" id="SM00173">
    <property type="entry name" value="RAS"/>
    <property type="match status" value="1"/>
</dbReference>
<dbReference type="SMART" id="SM00174">
    <property type="entry name" value="RHO"/>
    <property type="match status" value="1"/>
</dbReference>
<dbReference type="SUPFAM" id="SSF52540">
    <property type="entry name" value="P-loop containing nucleoside triphosphate hydrolases"/>
    <property type="match status" value="1"/>
</dbReference>
<dbReference type="PROSITE" id="PS51419">
    <property type="entry name" value="RAB"/>
    <property type="match status" value="1"/>
</dbReference>
<reference key="1">
    <citation type="submission" date="2007-07" db="EMBL/GenBank/DDBJ databases">
        <authorList>
            <consortium name="NIH - Mammalian Gene Collection (MGC) project"/>
        </authorList>
    </citation>
    <scope>NUCLEOTIDE SEQUENCE [LARGE SCALE MRNA]</scope>
    <source>
        <strain>Hereford</strain>
        <tissue>Hippocampus</tissue>
    </source>
</reference>
<sequence>MSAGGDFGNPLRKFKLVFLGEQSVGKTSLITRFMYDSFDNTYQATIGIDFLSKTMYLEDRTVRLQLWDTAGQERFRSLIPSYIRDSTVAVVVYDITNLNSFQQTSKWIDDVRTERGSDVIIMLVGNKTDLADKRQITIEEGEQRAKELSVMFIETSAKTGYNVKQLFRRVASALPGMENVQEKSKEGMIDIKLDKPQEPPASEGGCSC</sequence>
<comment type="function">
    <text evidence="2">The small GTPases Rab are key regulators of intracellular membrane trafficking, from the formation of transport vesicles to their fusion with membranes. Rabs cycle between active GTP-bound and inactive GDP-bound states. In their active state, drive transport of vesicular carriers from donor organelles to acceptor organelles to regulate the membrane traffic that maintains organelle identity and morphology. Recruits VPS13B to the Golgi membrane. Regulates the compacted morphology of the Golgi. Seems to have a role in retrograde membrane traffic at the level of the Golgi complex. May function in retrograde transport in neuronal cells. Plays a role in neuron projection development.</text>
</comment>
<comment type="catalytic activity">
    <reaction evidence="2">
        <text>GTP + H2O = GDP + phosphate + H(+)</text>
        <dbReference type="Rhea" id="RHEA:19669"/>
        <dbReference type="ChEBI" id="CHEBI:15377"/>
        <dbReference type="ChEBI" id="CHEBI:15378"/>
        <dbReference type="ChEBI" id="CHEBI:37565"/>
        <dbReference type="ChEBI" id="CHEBI:43474"/>
        <dbReference type="ChEBI" id="CHEBI:58189"/>
        <dbReference type="EC" id="3.6.5.2"/>
    </reaction>
    <physiologicalReaction direction="left-to-right" evidence="2">
        <dbReference type="Rhea" id="RHEA:19670"/>
    </physiologicalReaction>
</comment>
<comment type="activity regulation">
    <text evidence="2">Regulated by guanine nucleotide exchange factors (GEFs) which promote the exchange of bound GDP for free GTP, GTPase activating proteins (GAPs) which increase the GTP hydrolysis activity, and GDP dissociation inhibitors which inhibit the dissociation of the nucleotide from the GTPase.</text>
</comment>
<comment type="subunit">
    <text evidence="2">Interacts (GTP-bound) with BICD1 (via C-terminus); the interaction is direct. Interacts (GDP-bound) with DYNLRB1. Interacts (GTP-bound) with APBA1/MINT1. Interacts (GTP-bound) with VPS13B.</text>
</comment>
<comment type="subcellular location">
    <subcellularLocation>
        <location evidence="2">Golgi apparatus membrane</location>
        <topology evidence="3">Lipid-anchor</topology>
    </subcellularLocation>
    <subcellularLocation>
        <location evidence="2">Endoplasmic reticulum-Golgi intermediate compartment</location>
    </subcellularLocation>
    <subcellularLocation>
        <location evidence="2">Cytoplasmic vesicle</location>
    </subcellularLocation>
    <text evidence="2">Colocalizes with BICD1 at vesicular structures that align along microtubules.</text>
</comment>
<comment type="similarity">
    <text evidence="3">Belongs to the small GTPase superfamily. Rab family.</text>
</comment>
<accession>A6QR46</accession>
<organism>
    <name type="scientific">Bos taurus</name>
    <name type="common">Bovine</name>
    <dbReference type="NCBI Taxonomy" id="9913"/>
    <lineage>
        <taxon>Eukaryota</taxon>
        <taxon>Metazoa</taxon>
        <taxon>Chordata</taxon>
        <taxon>Craniata</taxon>
        <taxon>Vertebrata</taxon>
        <taxon>Euteleostomi</taxon>
        <taxon>Mammalia</taxon>
        <taxon>Eutheria</taxon>
        <taxon>Laurasiatheria</taxon>
        <taxon>Artiodactyla</taxon>
        <taxon>Ruminantia</taxon>
        <taxon>Pecora</taxon>
        <taxon>Bovidae</taxon>
        <taxon>Bovinae</taxon>
        <taxon>Bos</taxon>
    </lineage>
</organism>